<accession>P07209</accession>
<dbReference type="EMBL" id="V01550">
    <property type="protein sequence ID" value="CAA24790.1"/>
    <property type="molecule type" value="Genomic_DNA"/>
</dbReference>
<dbReference type="PIR" id="S07254">
    <property type="entry name" value="S07254"/>
</dbReference>
<dbReference type="GO" id="GO:0005886">
    <property type="term" value="C:plasma membrane"/>
    <property type="evidence" value="ECO:0007669"/>
    <property type="project" value="UniProtKB-SubCell"/>
</dbReference>
<dbReference type="GO" id="GO:0098552">
    <property type="term" value="C:side of membrane"/>
    <property type="evidence" value="ECO:0007669"/>
    <property type="project" value="UniProtKB-KW"/>
</dbReference>
<dbReference type="InterPro" id="IPR019609">
    <property type="entry name" value="Variant_surf_glycoprt_trypan_C"/>
</dbReference>
<dbReference type="Pfam" id="PF10659">
    <property type="entry name" value="Trypan_glycop_C"/>
    <property type="match status" value="1"/>
</dbReference>
<sequence length="72" mass="7937">AEKTAQACEEAEKATKCARQGTGKTGDKHNCAFRKGKDGKEEPEKEKCCDGSFLVNKKFALMVYDFVSLLAF</sequence>
<protein>
    <recommendedName>
        <fullName>Variant surface glycoprotein MITAT 1.1000BC</fullName>
        <shortName>VSG</shortName>
    </recommendedName>
</protein>
<name>VSM0_TRYBB</name>
<proteinExistence type="inferred from homology"/>
<reference key="1">
    <citation type="journal article" date="1983" name="J. Mol. Biol.">
        <title>The transposition unit of variant surface glycoprotein gene 118 of Trypanosoma brucei. Presence of repeated elements at its border and absence of promoter-associated sequences.</title>
        <authorList>
            <person name="Liu A.Y.C."/>
            <person name="van der Ploeg L.H.T."/>
            <person name="Rijsewijk F.A.M."/>
            <person name="Borst P."/>
        </authorList>
    </citation>
    <scope>NUCLEOTIDE SEQUENCE [GENOMIC DNA]</scope>
</reference>
<evidence type="ECO:0000250" key="1"/>
<evidence type="ECO:0000255" key="2"/>
<organism>
    <name type="scientific">Trypanosoma brucei brucei</name>
    <dbReference type="NCBI Taxonomy" id="5702"/>
    <lineage>
        <taxon>Eukaryota</taxon>
        <taxon>Discoba</taxon>
        <taxon>Euglenozoa</taxon>
        <taxon>Kinetoplastea</taxon>
        <taxon>Metakinetoplastina</taxon>
        <taxon>Trypanosomatida</taxon>
        <taxon>Trypanosomatidae</taxon>
        <taxon>Trypanosoma</taxon>
    </lineage>
</organism>
<keyword id="KW-1003">Cell membrane</keyword>
<keyword id="KW-0325">Glycoprotein</keyword>
<keyword id="KW-0336">GPI-anchor</keyword>
<keyword id="KW-0449">Lipoprotein</keyword>
<keyword id="KW-0472">Membrane</keyword>
<keyword id="KW-0821">Trypanosomiasis</keyword>
<feature type="chain" id="PRO_0000036429" description="Variant surface glycoprotein MITAT 1.1000BC">
    <location>
        <begin position="1" status="less than"/>
        <end position="50"/>
    </location>
</feature>
<feature type="propeptide" id="PRO_0000036430" description="Removed in mature form" evidence="2">
    <location>
        <begin position="51"/>
        <end position="72"/>
    </location>
</feature>
<feature type="lipid moiety-binding region" description="GPI-anchor amidated aspartate" evidence="2">
    <location>
        <position position="50"/>
    </location>
</feature>
<feature type="non-terminal residue">
    <location>
        <position position="1"/>
    </location>
</feature>
<comment type="function">
    <text>VSG forms a coat on the surface of the parasite. The trypanosome evades the immune response of the host by expressing a series of antigenically distinct VSGs from an estimated 1000 VSG genes.</text>
</comment>
<comment type="subcellular location">
    <subcellularLocation>
        <location>Cell membrane</location>
        <topology>Lipid-anchor</topology>
        <topology>GPI-anchor</topology>
    </subcellularLocation>
    <text evidence="1">A soluble form is released from ruptured cells by the action of a PI-PLC.</text>
</comment>